<evidence type="ECO:0000255" key="1">
    <source>
        <dbReference type="HAMAP-Rule" id="MF_01694"/>
    </source>
</evidence>
<evidence type="ECO:0000255" key="2">
    <source>
        <dbReference type="PROSITE-ProRule" id="PRU01266"/>
    </source>
</evidence>
<comment type="function">
    <text evidence="1">Catalyzes the conversion of dethiobiotin (DTB) to biotin by the insertion of a sulfur atom into dethiobiotin via a radical-based mechanism.</text>
</comment>
<comment type="catalytic activity">
    <reaction evidence="1">
        <text>(4R,5S)-dethiobiotin + (sulfur carrier)-SH + 2 reduced [2Fe-2S]-[ferredoxin] + 2 S-adenosyl-L-methionine = (sulfur carrier)-H + biotin + 2 5'-deoxyadenosine + 2 L-methionine + 2 oxidized [2Fe-2S]-[ferredoxin]</text>
        <dbReference type="Rhea" id="RHEA:22060"/>
        <dbReference type="Rhea" id="RHEA-COMP:10000"/>
        <dbReference type="Rhea" id="RHEA-COMP:10001"/>
        <dbReference type="Rhea" id="RHEA-COMP:14737"/>
        <dbReference type="Rhea" id="RHEA-COMP:14739"/>
        <dbReference type="ChEBI" id="CHEBI:17319"/>
        <dbReference type="ChEBI" id="CHEBI:29917"/>
        <dbReference type="ChEBI" id="CHEBI:33737"/>
        <dbReference type="ChEBI" id="CHEBI:33738"/>
        <dbReference type="ChEBI" id="CHEBI:57586"/>
        <dbReference type="ChEBI" id="CHEBI:57844"/>
        <dbReference type="ChEBI" id="CHEBI:59789"/>
        <dbReference type="ChEBI" id="CHEBI:64428"/>
        <dbReference type="ChEBI" id="CHEBI:149473"/>
        <dbReference type="EC" id="2.8.1.6"/>
    </reaction>
</comment>
<comment type="cofactor">
    <cofactor evidence="1">
        <name>[4Fe-4S] cluster</name>
        <dbReference type="ChEBI" id="CHEBI:49883"/>
    </cofactor>
    <text evidence="1">Binds 1 [4Fe-4S] cluster. The cluster is coordinated with 3 cysteines and an exchangeable S-adenosyl-L-methionine.</text>
</comment>
<comment type="cofactor">
    <cofactor evidence="1">
        <name>[2Fe-2S] cluster</name>
        <dbReference type="ChEBI" id="CHEBI:190135"/>
    </cofactor>
    <text evidence="1">Binds 1 [2Fe-2S] cluster. The cluster is coordinated with 3 cysteines and 1 arginine.</text>
</comment>
<comment type="pathway">
    <text evidence="1">Cofactor biosynthesis; biotin biosynthesis; biotin from 7,8-diaminononanoate: step 2/2.</text>
</comment>
<comment type="subunit">
    <text evidence="1">Homodimer.</text>
</comment>
<comment type="similarity">
    <text evidence="1">Belongs to the radical SAM superfamily. Biotin synthase family.</text>
</comment>
<reference key="1">
    <citation type="submission" date="2008-05" db="EMBL/GenBank/DDBJ databases">
        <title>Complete sequence of Chlorobium limicola DSM 245.</title>
        <authorList>
            <consortium name="US DOE Joint Genome Institute"/>
            <person name="Lucas S."/>
            <person name="Copeland A."/>
            <person name="Lapidus A."/>
            <person name="Glavina del Rio T."/>
            <person name="Dalin E."/>
            <person name="Tice H."/>
            <person name="Bruce D."/>
            <person name="Goodwin L."/>
            <person name="Pitluck S."/>
            <person name="Schmutz J."/>
            <person name="Larimer F."/>
            <person name="Land M."/>
            <person name="Hauser L."/>
            <person name="Kyrpides N."/>
            <person name="Ovchinnikova G."/>
            <person name="Zhao F."/>
            <person name="Li T."/>
            <person name="Liu Z."/>
            <person name="Overmann J."/>
            <person name="Bryant D.A."/>
            <person name="Richardson P."/>
        </authorList>
    </citation>
    <scope>NUCLEOTIDE SEQUENCE [LARGE SCALE GENOMIC DNA]</scope>
    <source>
        <strain>DSM 245 / NBRC 103803 / 6330</strain>
    </source>
</reference>
<accession>B3EI42</accession>
<sequence>MTSSVIHQAVIDAYRVLDTGEPLDRETALRLAALPGDAVLDLASLAHKVRLRYAGEAASLHACSIMNAKSGECGENCRFCAQSRHNSASIDVYDLAGEDAVLRQAEEAVDSGIPHFGIVTSGYGYLKITPEFNRILGMIDMLHRELPGLNVCASLGVLGEETSAALAAHGIAHYNINIQVAPSRYSDLIADTHTVVERIATVRLLRKHRIPVCCGGILGVGESMTERLEMIFALSELDVSVIPLNVLVPIDGTPLEGHRTADIADIVKTFAICRLVHPRTIIKFAAGRETVMKDFQGLLMLSGANGFLTGGYLTTRGREIDADRELGRQLESFTEG</sequence>
<dbReference type="EC" id="2.8.1.6" evidence="1"/>
<dbReference type="EMBL" id="CP001097">
    <property type="protein sequence ID" value="ACD91451.1"/>
    <property type="molecule type" value="Genomic_DNA"/>
</dbReference>
<dbReference type="RefSeq" id="WP_012467316.1">
    <property type="nucleotide sequence ID" value="NC_010803.1"/>
</dbReference>
<dbReference type="SMR" id="B3EI42"/>
<dbReference type="STRING" id="290315.Clim_2430"/>
<dbReference type="KEGG" id="cli:Clim_2430"/>
<dbReference type="eggNOG" id="COG0502">
    <property type="taxonomic scope" value="Bacteria"/>
</dbReference>
<dbReference type="HOGENOM" id="CLU_033172_2_1_10"/>
<dbReference type="OrthoDB" id="9786826at2"/>
<dbReference type="UniPathway" id="UPA00078">
    <property type="reaction ID" value="UER00162"/>
</dbReference>
<dbReference type="Proteomes" id="UP000008841">
    <property type="component" value="Chromosome"/>
</dbReference>
<dbReference type="GO" id="GO:0051537">
    <property type="term" value="F:2 iron, 2 sulfur cluster binding"/>
    <property type="evidence" value="ECO:0007669"/>
    <property type="project" value="UniProtKB-KW"/>
</dbReference>
<dbReference type="GO" id="GO:0051539">
    <property type="term" value="F:4 iron, 4 sulfur cluster binding"/>
    <property type="evidence" value="ECO:0007669"/>
    <property type="project" value="UniProtKB-KW"/>
</dbReference>
<dbReference type="GO" id="GO:0004076">
    <property type="term" value="F:biotin synthase activity"/>
    <property type="evidence" value="ECO:0007669"/>
    <property type="project" value="UniProtKB-UniRule"/>
</dbReference>
<dbReference type="GO" id="GO:0005506">
    <property type="term" value="F:iron ion binding"/>
    <property type="evidence" value="ECO:0007669"/>
    <property type="project" value="UniProtKB-UniRule"/>
</dbReference>
<dbReference type="GO" id="GO:0009102">
    <property type="term" value="P:biotin biosynthetic process"/>
    <property type="evidence" value="ECO:0007669"/>
    <property type="project" value="UniProtKB-UniRule"/>
</dbReference>
<dbReference type="CDD" id="cd01335">
    <property type="entry name" value="Radical_SAM"/>
    <property type="match status" value="1"/>
</dbReference>
<dbReference type="Gene3D" id="3.20.20.70">
    <property type="entry name" value="Aldolase class I"/>
    <property type="match status" value="1"/>
</dbReference>
<dbReference type="HAMAP" id="MF_01694">
    <property type="entry name" value="BioB"/>
    <property type="match status" value="1"/>
</dbReference>
<dbReference type="InterPro" id="IPR013785">
    <property type="entry name" value="Aldolase_TIM"/>
</dbReference>
<dbReference type="InterPro" id="IPR010722">
    <property type="entry name" value="BATS_dom"/>
</dbReference>
<dbReference type="InterPro" id="IPR002684">
    <property type="entry name" value="Biotin_synth/BioAB"/>
</dbReference>
<dbReference type="InterPro" id="IPR024177">
    <property type="entry name" value="Biotin_synthase"/>
</dbReference>
<dbReference type="InterPro" id="IPR006638">
    <property type="entry name" value="Elp3/MiaA/NifB-like_rSAM"/>
</dbReference>
<dbReference type="InterPro" id="IPR007197">
    <property type="entry name" value="rSAM"/>
</dbReference>
<dbReference type="NCBIfam" id="TIGR00433">
    <property type="entry name" value="bioB"/>
    <property type="match status" value="1"/>
</dbReference>
<dbReference type="PANTHER" id="PTHR22976">
    <property type="entry name" value="BIOTIN SYNTHASE"/>
    <property type="match status" value="1"/>
</dbReference>
<dbReference type="PANTHER" id="PTHR22976:SF2">
    <property type="entry name" value="BIOTIN SYNTHASE, MITOCHONDRIAL"/>
    <property type="match status" value="1"/>
</dbReference>
<dbReference type="Pfam" id="PF06968">
    <property type="entry name" value="BATS"/>
    <property type="match status" value="1"/>
</dbReference>
<dbReference type="Pfam" id="PF04055">
    <property type="entry name" value="Radical_SAM"/>
    <property type="match status" value="1"/>
</dbReference>
<dbReference type="PIRSF" id="PIRSF001619">
    <property type="entry name" value="Biotin_synth"/>
    <property type="match status" value="1"/>
</dbReference>
<dbReference type="SFLD" id="SFLDG01060">
    <property type="entry name" value="BATS_domain_containing"/>
    <property type="match status" value="1"/>
</dbReference>
<dbReference type="SFLD" id="SFLDG01278">
    <property type="entry name" value="biotin_synthase_like"/>
    <property type="match status" value="1"/>
</dbReference>
<dbReference type="SMART" id="SM00876">
    <property type="entry name" value="BATS"/>
    <property type="match status" value="1"/>
</dbReference>
<dbReference type="SMART" id="SM00729">
    <property type="entry name" value="Elp3"/>
    <property type="match status" value="1"/>
</dbReference>
<dbReference type="SUPFAM" id="SSF102114">
    <property type="entry name" value="Radical SAM enzymes"/>
    <property type="match status" value="1"/>
</dbReference>
<dbReference type="PROSITE" id="PS51918">
    <property type="entry name" value="RADICAL_SAM"/>
    <property type="match status" value="1"/>
</dbReference>
<gene>
    <name evidence="1" type="primary">bioB</name>
    <name type="ordered locus">Clim_2430</name>
</gene>
<protein>
    <recommendedName>
        <fullName evidence="1">Biotin synthase</fullName>
        <ecNumber evidence="1">2.8.1.6</ecNumber>
    </recommendedName>
</protein>
<feature type="chain" id="PRO_0000381299" description="Biotin synthase">
    <location>
        <begin position="1"/>
        <end position="336"/>
    </location>
</feature>
<feature type="domain" description="Radical SAM core" evidence="2">
    <location>
        <begin position="55"/>
        <end position="288"/>
    </location>
</feature>
<feature type="binding site" evidence="1">
    <location>
        <position position="73"/>
    </location>
    <ligand>
        <name>[4Fe-4S] cluster</name>
        <dbReference type="ChEBI" id="CHEBI:49883"/>
        <note>4Fe-4S-S-AdoMet</note>
    </ligand>
</feature>
<feature type="binding site" evidence="1">
    <location>
        <position position="77"/>
    </location>
    <ligand>
        <name>[4Fe-4S] cluster</name>
        <dbReference type="ChEBI" id="CHEBI:49883"/>
        <note>4Fe-4S-S-AdoMet</note>
    </ligand>
</feature>
<feature type="binding site" evidence="1">
    <location>
        <position position="80"/>
    </location>
    <ligand>
        <name>[4Fe-4S] cluster</name>
        <dbReference type="ChEBI" id="CHEBI:49883"/>
        <note>4Fe-4S-S-AdoMet</note>
    </ligand>
</feature>
<feature type="binding site" evidence="1">
    <location>
        <position position="152"/>
    </location>
    <ligand>
        <name>[2Fe-2S] cluster</name>
        <dbReference type="ChEBI" id="CHEBI:190135"/>
    </ligand>
</feature>
<feature type="binding site" evidence="1">
    <location>
        <position position="213"/>
    </location>
    <ligand>
        <name>[2Fe-2S] cluster</name>
        <dbReference type="ChEBI" id="CHEBI:190135"/>
    </ligand>
</feature>
<feature type="binding site" evidence="1">
    <location>
        <position position="283"/>
    </location>
    <ligand>
        <name>[2Fe-2S] cluster</name>
        <dbReference type="ChEBI" id="CHEBI:190135"/>
    </ligand>
</feature>
<proteinExistence type="inferred from homology"/>
<organism>
    <name type="scientific">Chlorobium limicola (strain DSM 245 / NBRC 103803 / 6330)</name>
    <dbReference type="NCBI Taxonomy" id="290315"/>
    <lineage>
        <taxon>Bacteria</taxon>
        <taxon>Pseudomonadati</taxon>
        <taxon>Chlorobiota</taxon>
        <taxon>Chlorobiia</taxon>
        <taxon>Chlorobiales</taxon>
        <taxon>Chlorobiaceae</taxon>
        <taxon>Chlorobium/Pelodictyon group</taxon>
        <taxon>Chlorobium</taxon>
    </lineage>
</organism>
<keyword id="KW-0001">2Fe-2S</keyword>
<keyword id="KW-0004">4Fe-4S</keyword>
<keyword id="KW-0093">Biotin biosynthesis</keyword>
<keyword id="KW-0408">Iron</keyword>
<keyword id="KW-0411">Iron-sulfur</keyword>
<keyword id="KW-0479">Metal-binding</keyword>
<keyword id="KW-0949">S-adenosyl-L-methionine</keyword>
<keyword id="KW-0808">Transferase</keyword>
<name>BIOB_CHLL2</name>